<evidence type="ECO:0000255" key="1">
    <source>
        <dbReference type="HAMAP-Rule" id="MF_00953"/>
    </source>
</evidence>
<evidence type="ECO:0000255" key="2">
    <source>
        <dbReference type="PROSITE-ProRule" id="PRU01383"/>
    </source>
</evidence>
<evidence type="ECO:0000256" key="3">
    <source>
        <dbReference type="SAM" id="MobiDB-lite"/>
    </source>
</evidence>
<feature type="chain" id="PRO_0000286368" description="DNA topoisomerase 3">
    <location>
        <begin position="1"/>
        <end position="711"/>
    </location>
</feature>
<feature type="domain" description="Toprim" evidence="1">
    <location>
        <begin position="2"/>
        <end position="135"/>
    </location>
</feature>
<feature type="domain" description="Topo IA-type catalytic" evidence="2">
    <location>
        <begin position="152"/>
        <end position="580"/>
    </location>
</feature>
<feature type="region of interest" description="Interaction with DNA" evidence="1">
    <location>
        <begin position="186"/>
        <end position="191"/>
    </location>
</feature>
<feature type="region of interest" description="Disordered" evidence="3">
    <location>
        <begin position="691"/>
        <end position="711"/>
    </location>
</feature>
<feature type="active site" description="O-(5'-phospho-DNA)-tyrosine intermediate" evidence="2">
    <location>
        <position position="305"/>
    </location>
</feature>
<feature type="binding site" evidence="1">
    <location>
        <position position="8"/>
    </location>
    <ligand>
        <name>Mg(2+)</name>
        <dbReference type="ChEBI" id="CHEBI:18420"/>
        <note>catalytic</note>
    </ligand>
</feature>
<feature type="binding site" evidence="1">
    <location>
        <position position="104"/>
    </location>
    <ligand>
        <name>Mg(2+)</name>
        <dbReference type="ChEBI" id="CHEBI:18420"/>
        <note>catalytic</note>
    </ligand>
</feature>
<feature type="site" description="Interaction with DNA" evidence="1">
    <location>
        <position position="60"/>
    </location>
</feature>
<feature type="site" description="Interaction with DNA" evidence="1">
    <location>
        <position position="167"/>
    </location>
</feature>
<feature type="site" description="Interaction with DNA" evidence="1">
    <location>
        <position position="175"/>
    </location>
</feature>
<feature type="site" description="Interaction with DNA" evidence="1">
    <location>
        <position position="307"/>
    </location>
</feature>
<comment type="function">
    <text evidence="1">Releases the supercoiling and torsional tension of DNA, which is introduced during the DNA replication and transcription, by transiently cleaving and rejoining one strand of the DNA duplex. Introduces a single-strand break via transesterification at a target site in duplex DNA. The scissile phosphodiester is attacked by the catalytic tyrosine of the enzyme, resulting in the formation of a DNA-(5'-phosphotyrosyl)-enzyme intermediate and the expulsion of a 3'-OH DNA strand. The free DNA strand then undergoes passage around the unbroken strand, thus removing DNA supercoils. Finally, in the religation step, the DNA 3'-OH attacks the covalent intermediate to expel the active-site tyrosine and restore the DNA phosphodiester backbone.</text>
</comment>
<comment type="catalytic activity">
    <reaction evidence="1">
        <text>ATP-independent breakage of single-stranded DNA, followed by passage and rejoining.</text>
        <dbReference type="EC" id="5.6.2.1"/>
    </reaction>
</comment>
<comment type="cofactor">
    <cofactor evidence="1">
        <name>Mg(2+)</name>
        <dbReference type="ChEBI" id="CHEBI:18420"/>
    </cofactor>
</comment>
<comment type="similarity">
    <text evidence="1 2">Belongs to the type IA topoisomerase family.</text>
</comment>
<dbReference type="EC" id="5.6.2.1" evidence="1"/>
<dbReference type="EMBL" id="CP000253">
    <property type="protein sequence ID" value="ABD31533.1"/>
    <property type="molecule type" value="Genomic_DNA"/>
</dbReference>
<dbReference type="RefSeq" id="WP_000838485.1">
    <property type="nucleotide sequence ID" value="NZ_LS483365.1"/>
</dbReference>
<dbReference type="RefSeq" id="YP_500982.1">
    <property type="nucleotide sequence ID" value="NC_007795.1"/>
</dbReference>
<dbReference type="SMR" id="Q2FW03"/>
<dbReference type="STRING" id="93061.SAOUHSC_02517"/>
<dbReference type="PaxDb" id="1280-SAXN108_2503"/>
<dbReference type="GeneID" id="3920891"/>
<dbReference type="KEGG" id="sao:SAOUHSC_02517"/>
<dbReference type="PATRIC" id="fig|93061.5.peg.2271"/>
<dbReference type="eggNOG" id="COG0550">
    <property type="taxonomic scope" value="Bacteria"/>
</dbReference>
<dbReference type="eggNOG" id="COG0551">
    <property type="taxonomic scope" value="Bacteria"/>
</dbReference>
<dbReference type="HOGENOM" id="CLU_002929_5_2_9"/>
<dbReference type="OrthoDB" id="9803554at2"/>
<dbReference type="Proteomes" id="UP000008816">
    <property type="component" value="Chromosome"/>
</dbReference>
<dbReference type="GO" id="GO:0043597">
    <property type="term" value="C:cytoplasmic replication fork"/>
    <property type="evidence" value="ECO:0000318"/>
    <property type="project" value="GO_Central"/>
</dbReference>
<dbReference type="GO" id="GO:0003677">
    <property type="term" value="F:DNA binding"/>
    <property type="evidence" value="ECO:0007669"/>
    <property type="project" value="UniProtKB-KW"/>
</dbReference>
<dbReference type="GO" id="GO:0003917">
    <property type="term" value="F:DNA topoisomerase type I (single strand cut, ATP-independent) activity"/>
    <property type="evidence" value="ECO:0000318"/>
    <property type="project" value="GO_Central"/>
</dbReference>
<dbReference type="GO" id="GO:0000287">
    <property type="term" value="F:magnesium ion binding"/>
    <property type="evidence" value="ECO:0007669"/>
    <property type="project" value="UniProtKB-UniRule"/>
</dbReference>
<dbReference type="GO" id="GO:0006310">
    <property type="term" value="P:DNA recombination"/>
    <property type="evidence" value="ECO:0000318"/>
    <property type="project" value="GO_Central"/>
</dbReference>
<dbReference type="GO" id="GO:0006281">
    <property type="term" value="P:DNA repair"/>
    <property type="evidence" value="ECO:0000318"/>
    <property type="project" value="GO_Central"/>
</dbReference>
<dbReference type="GO" id="GO:0006265">
    <property type="term" value="P:DNA topological change"/>
    <property type="evidence" value="ECO:0000318"/>
    <property type="project" value="GO_Central"/>
</dbReference>
<dbReference type="CDD" id="cd00186">
    <property type="entry name" value="TOP1Ac"/>
    <property type="match status" value="1"/>
</dbReference>
<dbReference type="CDD" id="cd03362">
    <property type="entry name" value="TOPRIM_TopoIA_TopoIII"/>
    <property type="match status" value="1"/>
</dbReference>
<dbReference type="Gene3D" id="3.40.50.140">
    <property type="match status" value="1"/>
</dbReference>
<dbReference type="Gene3D" id="1.10.460.10">
    <property type="entry name" value="Topoisomerase I, domain 2"/>
    <property type="match status" value="1"/>
</dbReference>
<dbReference type="Gene3D" id="2.70.20.10">
    <property type="entry name" value="Topoisomerase I, domain 3"/>
    <property type="match status" value="1"/>
</dbReference>
<dbReference type="Gene3D" id="1.10.290.10">
    <property type="entry name" value="Topoisomerase I, domain 4"/>
    <property type="match status" value="1"/>
</dbReference>
<dbReference type="HAMAP" id="MF_00953">
    <property type="entry name" value="Topoisom_3_prok"/>
    <property type="match status" value="1"/>
</dbReference>
<dbReference type="InterPro" id="IPR000380">
    <property type="entry name" value="Topo_IA"/>
</dbReference>
<dbReference type="InterPro" id="IPR003601">
    <property type="entry name" value="Topo_IA_2"/>
</dbReference>
<dbReference type="InterPro" id="IPR023406">
    <property type="entry name" value="Topo_IA_AS"/>
</dbReference>
<dbReference type="InterPro" id="IPR013497">
    <property type="entry name" value="Topo_IA_cen"/>
</dbReference>
<dbReference type="InterPro" id="IPR013824">
    <property type="entry name" value="Topo_IA_cen_sub1"/>
</dbReference>
<dbReference type="InterPro" id="IPR013825">
    <property type="entry name" value="Topo_IA_cen_sub2"/>
</dbReference>
<dbReference type="InterPro" id="IPR013826">
    <property type="entry name" value="Topo_IA_cen_sub3"/>
</dbReference>
<dbReference type="InterPro" id="IPR023405">
    <property type="entry name" value="Topo_IA_core_domain"/>
</dbReference>
<dbReference type="InterPro" id="IPR003602">
    <property type="entry name" value="Topo_IA_DNA-bd_dom"/>
</dbReference>
<dbReference type="InterPro" id="IPR005738">
    <property type="entry name" value="TopoIII"/>
</dbReference>
<dbReference type="InterPro" id="IPR006171">
    <property type="entry name" value="TOPRIM_dom"/>
</dbReference>
<dbReference type="InterPro" id="IPR034144">
    <property type="entry name" value="TOPRIM_TopoIII"/>
</dbReference>
<dbReference type="NCBIfam" id="NF005829">
    <property type="entry name" value="PRK07726.1"/>
    <property type="match status" value="1"/>
</dbReference>
<dbReference type="NCBIfam" id="TIGR01056">
    <property type="entry name" value="topB"/>
    <property type="match status" value="1"/>
</dbReference>
<dbReference type="PANTHER" id="PTHR11390:SF21">
    <property type="entry name" value="DNA TOPOISOMERASE 3-ALPHA"/>
    <property type="match status" value="1"/>
</dbReference>
<dbReference type="PANTHER" id="PTHR11390">
    <property type="entry name" value="PROKARYOTIC DNA TOPOISOMERASE"/>
    <property type="match status" value="1"/>
</dbReference>
<dbReference type="Pfam" id="PF01131">
    <property type="entry name" value="Topoisom_bac"/>
    <property type="match status" value="1"/>
</dbReference>
<dbReference type="Pfam" id="PF01751">
    <property type="entry name" value="Toprim"/>
    <property type="match status" value="1"/>
</dbReference>
<dbReference type="PRINTS" id="PR00417">
    <property type="entry name" value="PRTPISMRASEI"/>
</dbReference>
<dbReference type="SMART" id="SM00437">
    <property type="entry name" value="TOP1Ac"/>
    <property type="match status" value="1"/>
</dbReference>
<dbReference type="SMART" id="SM00436">
    <property type="entry name" value="TOP1Bc"/>
    <property type="match status" value="1"/>
</dbReference>
<dbReference type="SMART" id="SM00493">
    <property type="entry name" value="TOPRIM"/>
    <property type="match status" value="1"/>
</dbReference>
<dbReference type="SUPFAM" id="SSF56712">
    <property type="entry name" value="Prokaryotic type I DNA topoisomerase"/>
    <property type="match status" value="1"/>
</dbReference>
<dbReference type="PROSITE" id="PS00396">
    <property type="entry name" value="TOPO_IA_1"/>
    <property type="match status" value="1"/>
</dbReference>
<dbReference type="PROSITE" id="PS52039">
    <property type="entry name" value="TOPO_IA_2"/>
    <property type="match status" value="1"/>
</dbReference>
<dbReference type="PROSITE" id="PS50880">
    <property type="entry name" value="TOPRIM"/>
    <property type="match status" value="1"/>
</dbReference>
<gene>
    <name evidence="1" type="primary">topB</name>
    <name type="ordered locus">SAOUHSC_02517</name>
</gene>
<name>TOP3_STAA8</name>
<accession>Q2FW03</accession>
<organism>
    <name type="scientific">Staphylococcus aureus (strain NCTC 8325 / PS 47)</name>
    <dbReference type="NCBI Taxonomy" id="93061"/>
    <lineage>
        <taxon>Bacteria</taxon>
        <taxon>Bacillati</taxon>
        <taxon>Bacillota</taxon>
        <taxon>Bacilli</taxon>
        <taxon>Bacillales</taxon>
        <taxon>Staphylococcaceae</taxon>
        <taxon>Staphylococcus</taxon>
    </lineage>
</organism>
<protein>
    <recommendedName>
        <fullName evidence="1">DNA topoisomerase 3</fullName>
        <ecNumber evidence="1">5.6.2.1</ecNumber>
    </recommendedName>
    <alternativeName>
        <fullName evidence="1">DNA topoisomerase III</fullName>
    </alternativeName>
</protein>
<keyword id="KW-0238">DNA-binding</keyword>
<keyword id="KW-0413">Isomerase</keyword>
<keyword id="KW-0460">Magnesium</keyword>
<keyword id="KW-0479">Metal-binding</keyword>
<keyword id="KW-1185">Reference proteome</keyword>
<keyword id="KW-0799">Topoisomerase</keyword>
<proteinExistence type="inferred from homology"/>
<sequence length="711" mass="81552">MKSLILAEKPSVARDIADALQINQKRNGYFENNQYIVTWALGHLVTNATPEQYDKNLKEWRLEDLPIIPKYMKTVVIGKTSKQFKTVKALILDNKVKDIIIATDAGREGELVARLILDKVGNKKPIRRLWISSVTKKAIQQGFKNLKDGRQYNDLYYAALARSEADWIVGINATRALTTKYDAQLSLGRVQTPTIQLVNTRQQEINQFKPQQYFTLSLTVKGFDFQLESNQRYTNKETLEQMVNNLKNVDGKIKSVATKHKKSYPQSLYNLTDLQQDMYRRYKIGPKETLNTLQSLYERHKVVTYPRTDSNYLTTDMVDTMKERIQVTMATTYKDQARPLMSKTFSSKMSIFNNQKVSDHHAIIPTEVRPVMSDLSNRELKLYDMIVERFLEALMPPHEYDAITVTLEVAGHTFVLKENVTTVLGFKSIRQGESITEMQQPFSEGDEVKISKTNIREHETTPPEYFNEGSLLKAMENPQNFIQLKDKKYAQTLKQTGGIGTVATRADIIDKLFNMNAIESRDGKIKVTSKGKQILELAPEELTSPLLTAQWEEKLLLIERGKYQAKTFINEMKDFTKDVVNGIKNSDRKYKHDNLTTTECPTCGKFMIKVKTKNGQMLVCQDPSCKTKKNVQRKTNARCPNCKKKLTLFGKGKEAVYRCVCGHSETQAHMDQRMKSKSSGKVSRKEMKKYMNKNEGLDNNPFKDALKNLNL</sequence>
<reference key="1">
    <citation type="book" date="2006" name="Gram positive pathogens, 2nd edition">
        <title>The Staphylococcus aureus NCTC 8325 genome.</title>
        <editorList>
            <person name="Fischetti V."/>
            <person name="Novick R."/>
            <person name="Ferretti J."/>
            <person name="Portnoy D."/>
            <person name="Rood J."/>
        </editorList>
        <authorList>
            <person name="Gillaspy A.F."/>
            <person name="Worrell V."/>
            <person name="Orvis J."/>
            <person name="Roe B.A."/>
            <person name="Dyer D.W."/>
            <person name="Iandolo J.J."/>
        </authorList>
    </citation>
    <scope>NUCLEOTIDE SEQUENCE [LARGE SCALE GENOMIC DNA]</scope>
    <source>
        <strain>NCTC 8325 / PS 47</strain>
    </source>
</reference>